<name>RS3_MESHJ</name>
<proteinExistence type="inferred from homology"/>
<evidence type="ECO:0000255" key="1">
    <source>
        <dbReference type="HAMAP-Rule" id="MF_01309"/>
    </source>
</evidence>
<evidence type="ECO:0000305" key="2"/>
<reference key="1">
    <citation type="journal article" date="2005" name="J. Bacteriol.">
        <title>Swine and poultry pathogens: the complete genome sequences of two strains of Mycoplasma hyopneumoniae and a strain of Mycoplasma synoviae.</title>
        <authorList>
            <person name="Vasconcelos A.T.R."/>
            <person name="Ferreira H.B."/>
            <person name="Bizarro C.V."/>
            <person name="Bonatto S.L."/>
            <person name="Carvalho M.O."/>
            <person name="Pinto P.M."/>
            <person name="Almeida D.F."/>
            <person name="Almeida L.G.P."/>
            <person name="Almeida R."/>
            <person name="Alves-Junior L."/>
            <person name="Assuncao E.N."/>
            <person name="Azevedo V.A.C."/>
            <person name="Bogo M.R."/>
            <person name="Brigido M.M."/>
            <person name="Brocchi M."/>
            <person name="Burity H.A."/>
            <person name="Camargo A.A."/>
            <person name="Camargo S.S."/>
            <person name="Carepo M.S."/>
            <person name="Carraro D.M."/>
            <person name="de Mattos Cascardo J.C."/>
            <person name="Castro L.A."/>
            <person name="Cavalcanti G."/>
            <person name="Chemale G."/>
            <person name="Collevatti R.G."/>
            <person name="Cunha C.W."/>
            <person name="Dallagiovanna B."/>
            <person name="Dambros B.P."/>
            <person name="Dellagostin O.A."/>
            <person name="Falcao C."/>
            <person name="Fantinatti-Garboggini F."/>
            <person name="Felipe M.S.S."/>
            <person name="Fiorentin L."/>
            <person name="Franco G.R."/>
            <person name="Freitas N.S.A."/>
            <person name="Frias D."/>
            <person name="Grangeiro T.B."/>
            <person name="Grisard E.C."/>
            <person name="Guimaraes C.T."/>
            <person name="Hungria M."/>
            <person name="Jardim S.N."/>
            <person name="Krieger M.A."/>
            <person name="Laurino J.P."/>
            <person name="Lima L.F.A."/>
            <person name="Lopes M.I."/>
            <person name="Loreto E.L.S."/>
            <person name="Madeira H.M.F."/>
            <person name="Manfio G.P."/>
            <person name="Maranhao A.Q."/>
            <person name="Martinkovics C.T."/>
            <person name="Medeiros S.R.B."/>
            <person name="Moreira M.A.M."/>
            <person name="Neiva M."/>
            <person name="Ramalho-Neto C.E."/>
            <person name="Nicolas M.F."/>
            <person name="Oliveira S.C."/>
            <person name="Paixao R.F.C."/>
            <person name="Pedrosa F.O."/>
            <person name="Pena S.D.J."/>
            <person name="Pereira M."/>
            <person name="Pereira-Ferrari L."/>
            <person name="Piffer I."/>
            <person name="Pinto L.S."/>
            <person name="Potrich D.P."/>
            <person name="Salim A.C.M."/>
            <person name="Santos F.R."/>
            <person name="Schmitt R."/>
            <person name="Schneider M.P.C."/>
            <person name="Schrank A."/>
            <person name="Schrank I.S."/>
            <person name="Schuck A.F."/>
            <person name="Seuanez H.N."/>
            <person name="Silva D.W."/>
            <person name="Silva R."/>
            <person name="Silva S.C."/>
            <person name="Soares C.M.A."/>
            <person name="Souza K.R.L."/>
            <person name="Souza R.C."/>
            <person name="Staats C.C."/>
            <person name="Steffens M.B.R."/>
            <person name="Teixeira S.M.R."/>
            <person name="Urmenyi T.P."/>
            <person name="Vainstein M.H."/>
            <person name="Zuccherato L.W."/>
            <person name="Simpson A.J.G."/>
            <person name="Zaha A."/>
        </authorList>
    </citation>
    <scope>NUCLEOTIDE SEQUENCE [LARGE SCALE GENOMIC DNA]</scope>
    <source>
        <strain>J / ATCC 25934 / NCTC 10110</strain>
    </source>
</reference>
<dbReference type="EMBL" id="AE017243">
    <property type="protein sequence ID" value="AAZ44275.2"/>
    <property type="molecule type" value="Genomic_DNA"/>
</dbReference>
<dbReference type="RefSeq" id="WP_011206031.1">
    <property type="nucleotide sequence ID" value="NC_007295.1"/>
</dbReference>
<dbReference type="SMR" id="Q4AAE6"/>
<dbReference type="GeneID" id="41334487"/>
<dbReference type="KEGG" id="mhj:MHJ_0184"/>
<dbReference type="eggNOG" id="COG0092">
    <property type="taxonomic scope" value="Bacteria"/>
</dbReference>
<dbReference type="HOGENOM" id="CLU_058591_0_2_14"/>
<dbReference type="OrthoDB" id="9806396at2"/>
<dbReference type="Proteomes" id="UP000000548">
    <property type="component" value="Chromosome"/>
</dbReference>
<dbReference type="GO" id="GO:0022627">
    <property type="term" value="C:cytosolic small ribosomal subunit"/>
    <property type="evidence" value="ECO:0007669"/>
    <property type="project" value="TreeGrafter"/>
</dbReference>
<dbReference type="GO" id="GO:0003729">
    <property type="term" value="F:mRNA binding"/>
    <property type="evidence" value="ECO:0007669"/>
    <property type="project" value="UniProtKB-UniRule"/>
</dbReference>
<dbReference type="GO" id="GO:0019843">
    <property type="term" value="F:rRNA binding"/>
    <property type="evidence" value="ECO:0007669"/>
    <property type="project" value="UniProtKB-UniRule"/>
</dbReference>
<dbReference type="GO" id="GO:0003735">
    <property type="term" value="F:structural constituent of ribosome"/>
    <property type="evidence" value="ECO:0007669"/>
    <property type="project" value="InterPro"/>
</dbReference>
<dbReference type="GO" id="GO:0006412">
    <property type="term" value="P:translation"/>
    <property type="evidence" value="ECO:0007669"/>
    <property type="project" value="UniProtKB-UniRule"/>
</dbReference>
<dbReference type="CDD" id="cd02412">
    <property type="entry name" value="KH-II_30S_S3"/>
    <property type="match status" value="1"/>
</dbReference>
<dbReference type="Gene3D" id="3.30.300.20">
    <property type="match status" value="1"/>
</dbReference>
<dbReference type="Gene3D" id="3.30.1140.32">
    <property type="entry name" value="Ribosomal protein S3, C-terminal domain"/>
    <property type="match status" value="1"/>
</dbReference>
<dbReference type="HAMAP" id="MF_01309_B">
    <property type="entry name" value="Ribosomal_uS3_B"/>
    <property type="match status" value="1"/>
</dbReference>
<dbReference type="InterPro" id="IPR004087">
    <property type="entry name" value="KH_dom"/>
</dbReference>
<dbReference type="InterPro" id="IPR015946">
    <property type="entry name" value="KH_dom-like_a/b"/>
</dbReference>
<dbReference type="InterPro" id="IPR004044">
    <property type="entry name" value="KH_dom_type_2"/>
</dbReference>
<dbReference type="InterPro" id="IPR009019">
    <property type="entry name" value="KH_sf_prok-type"/>
</dbReference>
<dbReference type="InterPro" id="IPR036419">
    <property type="entry name" value="Ribosomal_S3_C_sf"/>
</dbReference>
<dbReference type="InterPro" id="IPR005704">
    <property type="entry name" value="Ribosomal_uS3_bac-typ"/>
</dbReference>
<dbReference type="InterPro" id="IPR001351">
    <property type="entry name" value="Ribosomal_uS3_C"/>
</dbReference>
<dbReference type="InterPro" id="IPR018280">
    <property type="entry name" value="Ribosomal_uS3_CS"/>
</dbReference>
<dbReference type="NCBIfam" id="TIGR01009">
    <property type="entry name" value="rpsC_bact"/>
    <property type="match status" value="1"/>
</dbReference>
<dbReference type="PANTHER" id="PTHR11760">
    <property type="entry name" value="30S/40S RIBOSOMAL PROTEIN S3"/>
    <property type="match status" value="1"/>
</dbReference>
<dbReference type="PANTHER" id="PTHR11760:SF19">
    <property type="entry name" value="SMALL RIBOSOMAL SUBUNIT PROTEIN US3C"/>
    <property type="match status" value="1"/>
</dbReference>
<dbReference type="Pfam" id="PF07650">
    <property type="entry name" value="KH_2"/>
    <property type="match status" value="1"/>
</dbReference>
<dbReference type="Pfam" id="PF00189">
    <property type="entry name" value="Ribosomal_S3_C"/>
    <property type="match status" value="1"/>
</dbReference>
<dbReference type="SMART" id="SM00322">
    <property type="entry name" value="KH"/>
    <property type="match status" value="1"/>
</dbReference>
<dbReference type="SUPFAM" id="SSF54814">
    <property type="entry name" value="Prokaryotic type KH domain (KH-domain type II)"/>
    <property type="match status" value="1"/>
</dbReference>
<dbReference type="SUPFAM" id="SSF54821">
    <property type="entry name" value="Ribosomal protein S3 C-terminal domain"/>
    <property type="match status" value="1"/>
</dbReference>
<dbReference type="PROSITE" id="PS50823">
    <property type="entry name" value="KH_TYPE_2"/>
    <property type="match status" value="1"/>
</dbReference>
<dbReference type="PROSITE" id="PS00548">
    <property type="entry name" value="RIBOSOMAL_S3"/>
    <property type="match status" value="1"/>
</dbReference>
<feature type="chain" id="PRO_0000293836" description="Small ribosomal subunit protein uS3">
    <location>
        <begin position="1"/>
        <end position="227"/>
    </location>
</feature>
<feature type="domain" description="KH type-2" evidence="1">
    <location>
        <begin position="39"/>
        <end position="109"/>
    </location>
</feature>
<accession>Q4AAE6</accession>
<comment type="function">
    <text evidence="1">Binds the lower part of the 30S subunit head. Binds mRNA in the 70S ribosome, positioning it for translation.</text>
</comment>
<comment type="subunit">
    <text evidence="1">Part of the 30S ribosomal subunit. Forms a tight complex with proteins S10 and S14.</text>
</comment>
<comment type="similarity">
    <text evidence="1">Belongs to the universal ribosomal protein uS3 family.</text>
</comment>
<protein>
    <recommendedName>
        <fullName evidence="1">Small ribosomal subunit protein uS3</fullName>
    </recommendedName>
    <alternativeName>
        <fullName evidence="2">30S ribosomal protein S3</fullName>
    </alternativeName>
</protein>
<keyword id="KW-0687">Ribonucleoprotein</keyword>
<keyword id="KW-0689">Ribosomal protein</keyword>
<keyword id="KW-0694">RNA-binding</keyword>
<keyword id="KW-0699">rRNA-binding</keyword>
<organism>
    <name type="scientific">Mesomycoplasma hyopneumoniae (strain J / ATCC 25934 / NCTC 10110)</name>
    <name type="common">Mycoplasma hyopneumoniae</name>
    <dbReference type="NCBI Taxonomy" id="262719"/>
    <lineage>
        <taxon>Bacteria</taxon>
        <taxon>Bacillati</taxon>
        <taxon>Mycoplasmatota</taxon>
        <taxon>Mycoplasmoidales</taxon>
        <taxon>Metamycoplasmataceae</taxon>
        <taxon>Mesomycoplasma</taxon>
    </lineage>
</organism>
<gene>
    <name evidence="1" type="primary">rpsC</name>
    <name type="ordered locus">MHJ_0184</name>
</gene>
<sequence length="227" mass="25753">MGQKVNPNGFRFGITRNHNAIWYADKNKFSINLLEDVKIHRFFEKLTREYQIGNTVIRRDRNNAITVLVYTAKLGSFLGASGENLKKIVEKLRKTLKNRKIVINVDAVDIQSPELNAKLMAELIAEKLEQRKSYRIAQKFAIRTALKNGATGVKTIVCGRLNGVEMARCEGYAEGEMKLHTLRQNVEYATAIAKTTYGILGVKVWVSLGEIKEKTDIDAIIRADKRR</sequence>